<dbReference type="EMBL" id="AAFI02000047">
    <property type="protein sequence ID" value="EAL66221.1"/>
    <property type="molecule type" value="Genomic_DNA"/>
</dbReference>
<dbReference type="RefSeq" id="XP_640227.1">
    <property type="nucleotide sequence ID" value="XM_635135.1"/>
</dbReference>
<dbReference type="FunCoup" id="Q54S12">
    <property type="interactions" value="15"/>
</dbReference>
<dbReference type="STRING" id="44689.Q54S12"/>
<dbReference type="GlyCosmos" id="Q54S12">
    <property type="glycosylation" value="4 sites, No reported glycans"/>
</dbReference>
<dbReference type="GlyGen" id="Q54S12">
    <property type="glycosylation" value="4 sites"/>
</dbReference>
<dbReference type="PaxDb" id="44689-DDB0232426"/>
<dbReference type="EnsemblProtists" id="EAL66221">
    <property type="protein sequence ID" value="EAL66221"/>
    <property type="gene ID" value="DDB_G0282723"/>
</dbReference>
<dbReference type="GeneID" id="8623767"/>
<dbReference type="KEGG" id="ddi:DDB_G0282723"/>
<dbReference type="dictyBase" id="DDB_G0282723">
    <property type="gene designation" value="tmem104"/>
</dbReference>
<dbReference type="VEuPathDB" id="AmoebaDB:DDB_G0282723"/>
<dbReference type="eggNOG" id="KOG3832">
    <property type="taxonomic scope" value="Eukaryota"/>
</dbReference>
<dbReference type="HOGENOM" id="CLU_025541_1_0_1"/>
<dbReference type="InParanoid" id="Q54S12"/>
<dbReference type="OMA" id="GHREGHP"/>
<dbReference type="PhylomeDB" id="Q54S12"/>
<dbReference type="PRO" id="PR:Q54S12"/>
<dbReference type="Proteomes" id="UP000002195">
    <property type="component" value="Chromosome 3"/>
</dbReference>
<dbReference type="GO" id="GO:0016020">
    <property type="term" value="C:membrane"/>
    <property type="evidence" value="ECO:0007669"/>
    <property type="project" value="UniProtKB-SubCell"/>
</dbReference>
<dbReference type="InterPro" id="IPR013057">
    <property type="entry name" value="AA_transpt_TM"/>
</dbReference>
<dbReference type="PANTHER" id="PTHR16189:SF0">
    <property type="entry name" value="TRANSMEMBRANE PROTEIN 104"/>
    <property type="match status" value="1"/>
</dbReference>
<dbReference type="PANTHER" id="PTHR16189">
    <property type="entry name" value="TRANSMEMBRANE PROTEIN 104-RELATED"/>
    <property type="match status" value="1"/>
</dbReference>
<dbReference type="Pfam" id="PF01490">
    <property type="entry name" value="Aa_trans"/>
    <property type="match status" value="1"/>
</dbReference>
<comment type="subcellular location">
    <subcellularLocation>
        <location evidence="2">Membrane</location>
        <topology evidence="2">Multi-pass membrane protein</topology>
    </subcellularLocation>
</comment>
<comment type="similarity">
    <text evidence="2">Belongs to the TMEM104 family.</text>
</comment>
<name>TM104_DICDI</name>
<gene>
    <name type="primary">tmem104</name>
    <name type="ORF">DDB_G0282723</name>
</gene>
<accession>Q54S12</accession>
<reference key="1">
    <citation type="journal article" date="2005" name="Nature">
        <title>The genome of the social amoeba Dictyostelium discoideum.</title>
        <authorList>
            <person name="Eichinger L."/>
            <person name="Pachebat J.A."/>
            <person name="Gloeckner G."/>
            <person name="Rajandream M.A."/>
            <person name="Sucgang R."/>
            <person name="Berriman M."/>
            <person name="Song J."/>
            <person name="Olsen R."/>
            <person name="Szafranski K."/>
            <person name="Xu Q."/>
            <person name="Tunggal B."/>
            <person name="Kummerfeld S."/>
            <person name="Madera M."/>
            <person name="Konfortov B.A."/>
            <person name="Rivero F."/>
            <person name="Bankier A.T."/>
            <person name="Lehmann R."/>
            <person name="Hamlin N."/>
            <person name="Davies R."/>
            <person name="Gaudet P."/>
            <person name="Fey P."/>
            <person name="Pilcher K."/>
            <person name="Chen G."/>
            <person name="Saunders D."/>
            <person name="Sodergren E.J."/>
            <person name="Davis P."/>
            <person name="Kerhornou A."/>
            <person name="Nie X."/>
            <person name="Hall N."/>
            <person name="Anjard C."/>
            <person name="Hemphill L."/>
            <person name="Bason N."/>
            <person name="Farbrother P."/>
            <person name="Desany B."/>
            <person name="Just E."/>
            <person name="Morio T."/>
            <person name="Rost R."/>
            <person name="Churcher C.M."/>
            <person name="Cooper J."/>
            <person name="Haydock S."/>
            <person name="van Driessche N."/>
            <person name="Cronin A."/>
            <person name="Goodhead I."/>
            <person name="Muzny D.M."/>
            <person name="Mourier T."/>
            <person name="Pain A."/>
            <person name="Lu M."/>
            <person name="Harper D."/>
            <person name="Lindsay R."/>
            <person name="Hauser H."/>
            <person name="James K.D."/>
            <person name="Quiles M."/>
            <person name="Madan Babu M."/>
            <person name="Saito T."/>
            <person name="Buchrieser C."/>
            <person name="Wardroper A."/>
            <person name="Felder M."/>
            <person name="Thangavelu M."/>
            <person name="Johnson D."/>
            <person name="Knights A."/>
            <person name="Loulseged H."/>
            <person name="Mungall K.L."/>
            <person name="Oliver K."/>
            <person name="Price C."/>
            <person name="Quail M.A."/>
            <person name="Urushihara H."/>
            <person name="Hernandez J."/>
            <person name="Rabbinowitsch E."/>
            <person name="Steffen D."/>
            <person name="Sanders M."/>
            <person name="Ma J."/>
            <person name="Kohara Y."/>
            <person name="Sharp S."/>
            <person name="Simmonds M.N."/>
            <person name="Spiegler S."/>
            <person name="Tivey A."/>
            <person name="Sugano S."/>
            <person name="White B."/>
            <person name="Walker D."/>
            <person name="Woodward J.R."/>
            <person name="Winckler T."/>
            <person name="Tanaka Y."/>
            <person name="Shaulsky G."/>
            <person name="Schleicher M."/>
            <person name="Weinstock G.M."/>
            <person name="Rosenthal A."/>
            <person name="Cox E.C."/>
            <person name="Chisholm R.L."/>
            <person name="Gibbs R.A."/>
            <person name="Loomis W.F."/>
            <person name="Platzer M."/>
            <person name="Kay R.R."/>
            <person name="Williams J.G."/>
            <person name="Dear P.H."/>
            <person name="Noegel A.A."/>
            <person name="Barrell B.G."/>
            <person name="Kuspa A."/>
        </authorList>
    </citation>
    <scope>NUCLEOTIDE SEQUENCE [LARGE SCALE GENOMIC DNA]</scope>
    <source>
        <strain>AX4</strain>
    </source>
</reference>
<protein>
    <recommendedName>
        <fullName>Transmembrane protein 104 homolog</fullName>
    </recommendedName>
</protein>
<evidence type="ECO:0000255" key="1"/>
<evidence type="ECO:0000305" key="2"/>
<organism>
    <name type="scientific">Dictyostelium discoideum</name>
    <name type="common">Social amoeba</name>
    <dbReference type="NCBI Taxonomy" id="44689"/>
    <lineage>
        <taxon>Eukaryota</taxon>
        <taxon>Amoebozoa</taxon>
        <taxon>Evosea</taxon>
        <taxon>Eumycetozoa</taxon>
        <taxon>Dictyostelia</taxon>
        <taxon>Dictyosteliales</taxon>
        <taxon>Dictyosteliaceae</taxon>
        <taxon>Dictyostelium</taxon>
    </lineage>
</organism>
<sequence>MAGGPSDGSTYSKKTAFVYIFNLIVGVGALALPYGFSKAGLVLGLLFLAAIGFLAFITATWLIEGLSIANFILVNKKEERIIGDDDNENYQKPPTENDSLINSEYSDNKILQSNAEDRNLLEPSGGSSSSDNEQFEIKKRVEVGEMSKMFLGNIGYKVFYGVLIIYLFGDLSIYAATVPTTLANVTGGWGKFTDHTVYYFYLFLFACFVGPFSLFNFQKTKYLQFATLITRNVAFLLMIILSIIFIAQGNGASIKQVPIFEISELASIFGVSIYSFMTHHSIPGFLTPISKKDRLFTLMGLDFILVFIAYGTLCVVSLFAFGAVTNPTCATASTSIHTFIPCQIQSLYIYNFTSYNSKFVSDFLSLFPVFTLSTNYILISITLRNNLLQLITWKQDKISSKVRNVVFSLTSSLIPVGVAFCTRNVSLLVNITGSYAGLGIMFVMPALISFYSNKILIEQYHISNPKKSPFSNKFFYLLILLISVICLILATWKIIITYK</sequence>
<feature type="chain" id="PRO_0000330343" description="Transmembrane protein 104 homolog">
    <location>
        <begin position="1"/>
        <end position="499"/>
    </location>
</feature>
<feature type="transmembrane region" description="Helical" evidence="1">
    <location>
        <begin position="16"/>
        <end position="36"/>
    </location>
</feature>
<feature type="transmembrane region" description="Helical" evidence="1">
    <location>
        <begin position="39"/>
        <end position="59"/>
    </location>
</feature>
<feature type="transmembrane region" description="Helical" evidence="1">
    <location>
        <begin position="158"/>
        <end position="178"/>
    </location>
</feature>
<feature type="transmembrane region" description="Helical" evidence="1">
    <location>
        <begin position="197"/>
        <end position="217"/>
    </location>
</feature>
<feature type="transmembrane region" description="Helical" evidence="1">
    <location>
        <begin position="234"/>
        <end position="254"/>
    </location>
</feature>
<feature type="transmembrane region" description="Helical" evidence="1">
    <location>
        <begin position="257"/>
        <end position="277"/>
    </location>
</feature>
<feature type="transmembrane region" description="Helical" evidence="1">
    <location>
        <begin position="303"/>
        <end position="323"/>
    </location>
</feature>
<feature type="transmembrane region" description="Helical" evidence="1">
    <location>
        <begin position="363"/>
        <end position="383"/>
    </location>
</feature>
<feature type="transmembrane region" description="Helical" evidence="1">
    <location>
        <begin position="402"/>
        <end position="422"/>
    </location>
</feature>
<feature type="transmembrane region" description="Helical" evidence="1">
    <location>
        <begin position="428"/>
        <end position="448"/>
    </location>
</feature>
<feature type="transmembrane region" description="Helical" evidence="1">
    <location>
        <begin position="476"/>
        <end position="496"/>
    </location>
</feature>
<feature type="glycosylation site" description="N-linked (GlcNAc...) asparagine" evidence="1">
    <location>
        <position position="97"/>
    </location>
</feature>
<feature type="glycosylation site" description="N-linked (GlcNAc...) asparagine" evidence="1">
    <location>
        <position position="184"/>
    </location>
</feature>
<feature type="glycosylation site" description="N-linked (GlcNAc...) asparagine" evidence="1">
    <location>
        <position position="351"/>
    </location>
</feature>
<feature type="glycosylation site" description="N-linked (GlcNAc...) asparagine" evidence="1">
    <location>
        <position position="424"/>
    </location>
</feature>
<proteinExistence type="inferred from homology"/>
<keyword id="KW-0325">Glycoprotein</keyword>
<keyword id="KW-0472">Membrane</keyword>
<keyword id="KW-1185">Reference proteome</keyword>
<keyword id="KW-0812">Transmembrane</keyword>
<keyword id="KW-1133">Transmembrane helix</keyword>